<feature type="chain" id="PRO_0000177769" description="Peptide chain release factor 1">
    <location>
        <begin position="1"/>
        <end position="362"/>
    </location>
</feature>
<feature type="modified residue" description="N5-methylglutamine" evidence="1">
    <location>
        <position position="237"/>
    </location>
</feature>
<sequence length="362" mass="40138">MKASILTKLEMLVERYEEVQHLLGDPGVIGDQDKFRALSKEYSQLEEVTKCFTAYKQAQEDLVAAEEMAKEDDAEMREMAQEEIKAAKVAIEDLAAELQILLLPKDPNDDRNCFLEIRAGAGGDEAGIFAGDLFRMYSKFAEKRGWRIEVMSANEAEHGGYKEMIAKVNGDGAYGFLKFESGGHRVQRVPATESQGRVHTSACTVAIMPEIPEAEIPEIKASDLKIDTFRSSGAGGQHVNTTDSAIRITHLPTGTVVECQDERSQHKNKAKAMAVLAARIVQAEEAKRAAEVSDTRRNLLGSGDRSDRIRTYNYPQGRVSDHRINLTIYRLSEVMEGDLQSLIDPVIQEHQADQLAALAENN</sequence>
<protein>
    <recommendedName>
        <fullName evidence="1">Peptide chain release factor 1</fullName>
        <shortName evidence="1">RF-1</shortName>
    </recommendedName>
</protein>
<keyword id="KW-0963">Cytoplasm</keyword>
<keyword id="KW-0488">Methylation</keyword>
<keyword id="KW-0648">Protein biosynthesis</keyword>
<organism>
    <name type="scientific">Vibrio vulnificus (strain YJ016)</name>
    <dbReference type="NCBI Taxonomy" id="196600"/>
    <lineage>
        <taxon>Bacteria</taxon>
        <taxon>Pseudomonadati</taxon>
        <taxon>Pseudomonadota</taxon>
        <taxon>Gammaproteobacteria</taxon>
        <taxon>Vibrionales</taxon>
        <taxon>Vibrionaceae</taxon>
        <taxon>Vibrio</taxon>
    </lineage>
</organism>
<gene>
    <name evidence="1" type="primary">prfA</name>
    <name type="ordered locus">VV0931</name>
</gene>
<name>RF1_VIBVY</name>
<dbReference type="EMBL" id="BA000037">
    <property type="protein sequence ID" value="BAC93695.1"/>
    <property type="status" value="ALT_INIT"/>
    <property type="molecule type" value="Genomic_DNA"/>
</dbReference>
<dbReference type="RefSeq" id="WP_011078367.1">
    <property type="nucleotide sequence ID" value="NC_005139.1"/>
</dbReference>
<dbReference type="SMR" id="Q7MMY6"/>
<dbReference type="STRING" id="672.VV93_v1c08620"/>
<dbReference type="KEGG" id="vvy:VV0931"/>
<dbReference type="eggNOG" id="COG0216">
    <property type="taxonomic scope" value="Bacteria"/>
</dbReference>
<dbReference type="HOGENOM" id="CLU_036856_0_1_6"/>
<dbReference type="Proteomes" id="UP000002675">
    <property type="component" value="Chromosome I"/>
</dbReference>
<dbReference type="GO" id="GO:0005737">
    <property type="term" value="C:cytoplasm"/>
    <property type="evidence" value="ECO:0007669"/>
    <property type="project" value="UniProtKB-SubCell"/>
</dbReference>
<dbReference type="GO" id="GO:0016149">
    <property type="term" value="F:translation release factor activity, codon specific"/>
    <property type="evidence" value="ECO:0007669"/>
    <property type="project" value="UniProtKB-UniRule"/>
</dbReference>
<dbReference type="FunFam" id="3.30.160.20:FF:000004">
    <property type="entry name" value="Peptide chain release factor 1"/>
    <property type="match status" value="1"/>
</dbReference>
<dbReference type="FunFam" id="3.30.70.1660:FF:000002">
    <property type="entry name" value="Peptide chain release factor 1"/>
    <property type="match status" value="1"/>
</dbReference>
<dbReference type="FunFam" id="3.30.70.1660:FF:000004">
    <property type="entry name" value="Peptide chain release factor 1"/>
    <property type="match status" value="1"/>
</dbReference>
<dbReference type="Gene3D" id="3.30.160.20">
    <property type="match status" value="1"/>
</dbReference>
<dbReference type="Gene3D" id="3.30.70.1660">
    <property type="match status" value="1"/>
</dbReference>
<dbReference type="Gene3D" id="6.10.140.1950">
    <property type="match status" value="1"/>
</dbReference>
<dbReference type="HAMAP" id="MF_00093">
    <property type="entry name" value="Rel_fac_1"/>
    <property type="match status" value="1"/>
</dbReference>
<dbReference type="InterPro" id="IPR005139">
    <property type="entry name" value="PCRF"/>
</dbReference>
<dbReference type="InterPro" id="IPR000352">
    <property type="entry name" value="Pep_chain_release_fac_I"/>
</dbReference>
<dbReference type="InterPro" id="IPR045853">
    <property type="entry name" value="Pep_chain_release_fac_I_sf"/>
</dbReference>
<dbReference type="InterPro" id="IPR050057">
    <property type="entry name" value="Prokaryotic/Mito_RF"/>
</dbReference>
<dbReference type="InterPro" id="IPR004373">
    <property type="entry name" value="RF-1"/>
</dbReference>
<dbReference type="NCBIfam" id="TIGR00019">
    <property type="entry name" value="prfA"/>
    <property type="match status" value="1"/>
</dbReference>
<dbReference type="NCBIfam" id="NF001859">
    <property type="entry name" value="PRK00591.1"/>
    <property type="match status" value="1"/>
</dbReference>
<dbReference type="PANTHER" id="PTHR43804">
    <property type="entry name" value="LD18447P"/>
    <property type="match status" value="1"/>
</dbReference>
<dbReference type="PANTHER" id="PTHR43804:SF7">
    <property type="entry name" value="LD18447P"/>
    <property type="match status" value="1"/>
</dbReference>
<dbReference type="Pfam" id="PF03462">
    <property type="entry name" value="PCRF"/>
    <property type="match status" value="1"/>
</dbReference>
<dbReference type="Pfam" id="PF00472">
    <property type="entry name" value="RF-1"/>
    <property type="match status" value="1"/>
</dbReference>
<dbReference type="SMART" id="SM00937">
    <property type="entry name" value="PCRF"/>
    <property type="match status" value="1"/>
</dbReference>
<dbReference type="SUPFAM" id="SSF75620">
    <property type="entry name" value="Release factor"/>
    <property type="match status" value="1"/>
</dbReference>
<dbReference type="PROSITE" id="PS00745">
    <property type="entry name" value="RF_PROK_I"/>
    <property type="match status" value="1"/>
</dbReference>
<evidence type="ECO:0000255" key="1">
    <source>
        <dbReference type="HAMAP-Rule" id="MF_00093"/>
    </source>
</evidence>
<evidence type="ECO:0000305" key="2"/>
<accession>Q7MMY6</accession>
<reference key="1">
    <citation type="journal article" date="2003" name="Genome Res.">
        <title>Comparative genome analysis of Vibrio vulnificus, a marine pathogen.</title>
        <authorList>
            <person name="Chen C.-Y."/>
            <person name="Wu K.-M."/>
            <person name="Chang Y.-C."/>
            <person name="Chang C.-H."/>
            <person name="Tsai H.-C."/>
            <person name="Liao T.-L."/>
            <person name="Liu Y.-M."/>
            <person name="Chen H.-J."/>
            <person name="Shen A.B.-T."/>
            <person name="Li J.-C."/>
            <person name="Su T.-L."/>
            <person name="Shao C.-P."/>
            <person name="Lee C.-T."/>
            <person name="Hor L.-I."/>
            <person name="Tsai S.-F."/>
        </authorList>
    </citation>
    <scope>NUCLEOTIDE SEQUENCE [LARGE SCALE GENOMIC DNA]</scope>
    <source>
        <strain>YJ016</strain>
    </source>
</reference>
<proteinExistence type="inferred from homology"/>
<comment type="function">
    <text evidence="1">Peptide chain release factor 1 directs the termination of translation in response to the peptide chain termination codons UAG and UAA.</text>
</comment>
<comment type="subcellular location">
    <subcellularLocation>
        <location evidence="1">Cytoplasm</location>
    </subcellularLocation>
</comment>
<comment type="PTM">
    <text evidence="1">Methylated by PrmC. Methylation increases the termination efficiency of RF1.</text>
</comment>
<comment type="similarity">
    <text evidence="1">Belongs to the prokaryotic/mitochondrial release factor family.</text>
</comment>
<comment type="sequence caution" evidence="2">
    <conflict type="erroneous initiation">
        <sequence resource="EMBL-CDS" id="BAC93695"/>
    </conflict>
</comment>